<proteinExistence type="evidence at protein level"/>
<keyword id="KW-0002">3D-structure</keyword>
<keyword id="KW-0067">ATP-binding</keyword>
<keyword id="KW-0963">Cytoplasm</keyword>
<keyword id="KW-0341">Growth regulation</keyword>
<keyword id="KW-0547">Nucleotide-binding</keyword>
<keyword id="KW-0597">Phosphoprotein</keyword>
<keyword id="KW-1185">Reference proteome</keyword>
<keyword id="KW-0810">Translation regulation</keyword>
<reference key="1">
    <citation type="journal article" date="1994" name="Nature">
        <title>Complete DNA sequence of yeast chromosome XI.</title>
        <authorList>
            <person name="Dujon B."/>
            <person name="Alexandraki D."/>
            <person name="Andre B."/>
            <person name="Ansorge W."/>
            <person name="Baladron V."/>
            <person name="Ballesta J.P.G."/>
            <person name="Banrevi A."/>
            <person name="Bolle P.-A."/>
            <person name="Bolotin-Fukuhara M."/>
            <person name="Bossier P."/>
            <person name="Bou G."/>
            <person name="Boyer J."/>
            <person name="Buitrago M.J."/>
            <person name="Cheret G."/>
            <person name="Colleaux L."/>
            <person name="Daignan-Fornier B."/>
            <person name="del Rey F."/>
            <person name="Dion C."/>
            <person name="Domdey H."/>
            <person name="Duesterhoeft A."/>
            <person name="Duesterhus S."/>
            <person name="Entian K.-D."/>
            <person name="Erfle H."/>
            <person name="Esteban P.F."/>
            <person name="Feldmann H."/>
            <person name="Fernandes L."/>
            <person name="Fobo G.M."/>
            <person name="Fritz C."/>
            <person name="Fukuhara H."/>
            <person name="Gabel C."/>
            <person name="Gaillon L."/>
            <person name="Garcia-Cantalejo J.M."/>
            <person name="Garcia-Ramirez J.J."/>
            <person name="Gent M.E."/>
            <person name="Ghazvini M."/>
            <person name="Goffeau A."/>
            <person name="Gonzalez A."/>
            <person name="Grothues D."/>
            <person name="Guerreiro P."/>
            <person name="Hegemann J.H."/>
            <person name="Hewitt N."/>
            <person name="Hilger F."/>
            <person name="Hollenberg C.P."/>
            <person name="Horaitis O."/>
            <person name="Indge K.J."/>
            <person name="Jacquier A."/>
            <person name="James C.M."/>
            <person name="Jauniaux J.-C."/>
            <person name="Jimenez A."/>
            <person name="Keuchel H."/>
            <person name="Kirchrath L."/>
            <person name="Kleine K."/>
            <person name="Koetter P."/>
            <person name="Legrain P."/>
            <person name="Liebl S."/>
            <person name="Louis E.J."/>
            <person name="Maia e Silva A."/>
            <person name="Marck C."/>
            <person name="Monnier A.-L."/>
            <person name="Moestl D."/>
            <person name="Mueller S."/>
            <person name="Obermaier B."/>
            <person name="Oliver S.G."/>
            <person name="Pallier C."/>
            <person name="Pascolo S."/>
            <person name="Pfeiffer F."/>
            <person name="Philippsen P."/>
            <person name="Planta R.J."/>
            <person name="Pohl F.M."/>
            <person name="Pohl T.M."/>
            <person name="Poehlmann R."/>
            <person name="Portetelle D."/>
            <person name="Purnelle B."/>
            <person name="Puzos V."/>
            <person name="Ramezani Rad M."/>
            <person name="Rasmussen S.W."/>
            <person name="Remacha M.A."/>
            <person name="Revuelta J.L."/>
            <person name="Richard G.-F."/>
            <person name="Rieger M."/>
            <person name="Rodrigues-Pousada C."/>
            <person name="Rose M."/>
            <person name="Rupp T."/>
            <person name="Santos M.A."/>
            <person name="Schwager C."/>
            <person name="Sensen C."/>
            <person name="Skala J."/>
            <person name="Soares H."/>
            <person name="Sor F."/>
            <person name="Stegemann J."/>
            <person name="Tettelin H."/>
            <person name="Thierry A."/>
            <person name="Tzermia M."/>
            <person name="Urrestarazu L.A."/>
            <person name="van Dyck L."/>
            <person name="van Vliet-Reedijk J.C."/>
            <person name="Valens M."/>
            <person name="Vandenbol M."/>
            <person name="Vilela C."/>
            <person name="Vissers S."/>
            <person name="von Wettstein D."/>
            <person name="Voss H."/>
            <person name="Wiemann S."/>
            <person name="Xu G."/>
            <person name="Zimmermann J."/>
            <person name="Haasemann M."/>
            <person name="Becker I."/>
            <person name="Mewes H.-W."/>
        </authorList>
    </citation>
    <scope>NUCLEOTIDE SEQUENCE [LARGE SCALE GENOMIC DNA]</scope>
    <source>
        <strain>ATCC 204508 / S288c</strain>
    </source>
</reference>
<reference key="2">
    <citation type="journal article" date="2014" name="G3 (Bethesda)">
        <title>The reference genome sequence of Saccharomyces cerevisiae: Then and now.</title>
        <authorList>
            <person name="Engel S.R."/>
            <person name="Dietrich F.S."/>
            <person name="Fisk D.G."/>
            <person name="Binkley G."/>
            <person name="Balakrishnan R."/>
            <person name="Costanzo M.C."/>
            <person name="Dwight S.S."/>
            <person name="Hitz B.C."/>
            <person name="Karra K."/>
            <person name="Nash R.S."/>
            <person name="Weng S."/>
            <person name="Wong E.D."/>
            <person name="Lloyd P."/>
            <person name="Skrzypek M.S."/>
            <person name="Miyasato S.R."/>
            <person name="Simison M."/>
            <person name="Cherry J.M."/>
        </authorList>
    </citation>
    <scope>GENOME REANNOTATION</scope>
    <source>
        <strain>ATCC 204508 / S288c</strain>
    </source>
</reference>
<reference key="3">
    <citation type="journal article" date="2000" name="Curr. Biol.">
        <title>Yeast Eap1p, an eIF4E-associated protein, has a separate function involving genetic stability.</title>
        <authorList>
            <person name="Chial H.J."/>
            <person name="Stemm-Wolf A.J."/>
            <person name="McBratney S."/>
            <person name="Winey M."/>
        </authorList>
    </citation>
    <scope>FUNCTION</scope>
</reference>
<reference key="4">
    <citation type="journal article" date="2000" name="Mol. Cell. Biol.">
        <title>Eap1p, a novel eukaryotic translation initiation factor 4E-associated protein in Saccharomyces cerevisiae.</title>
        <authorList>
            <person name="Cosentino G.P."/>
            <person name="Schmelzle T."/>
            <person name="Haghighat A."/>
            <person name="Helliwell S.B."/>
            <person name="Hall M.N."/>
            <person name="Sonenberg N."/>
        </authorList>
    </citation>
    <scope>FUNCTION</scope>
    <scope>INTERACTION WITH EIF4E</scope>
    <scope>MUTAGENESIS OF TYR-109</scope>
</reference>
<reference key="5">
    <citation type="journal article" date="2003" name="Nature">
        <title>Global analysis of protein localization in budding yeast.</title>
        <authorList>
            <person name="Huh W.-K."/>
            <person name="Falvo J.V."/>
            <person name="Gerke L.C."/>
            <person name="Carroll A.S."/>
            <person name="Howson R.W."/>
            <person name="Weissman J.S."/>
            <person name="O'Shea E.K."/>
        </authorList>
    </citation>
    <scope>SUBCELLULAR LOCATION [LARGE SCALE ANALYSIS]</scope>
</reference>
<reference key="6">
    <citation type="journal article" date="2003" name="Nature">
        <title>Global analysis of protein expression in yeast.</title>
        <authorList>
            <person name="Ghaemmaghami S."/>
            <person name="Huh W.-K."/>
            <person name="Bower K."/>
            <person name="Howson R.W."/>
            <person name="Belle A."/>
            <person name="Dephoure N."/>
            <person name="O'Shea E.K."/>
            <person name="Weissman J.S."/>
        </authorList>
    </citation>
    <scope>LEVEL OF PROTEIN EXPRESSION [LARGE SCALE ANALYSIS]</scope>
</reference>
<reference key="7">
    <citation type="journal article" date="2005" name="FEBS Lett.">
        <title>The yeast eIF4E-associated protein Eap1p attenuates GCN4 translation upon TOR-inactivation.</title>
        <authorList>
            <person name="Matsuo R."/>
            <person name="Kubota H."/>
            <person name="Obata T."/>
            <person name="Kito K."/>
            <person name="Ota K."/>
            <person name="Kitazono T."/>
            <person name="Ibayashi S."/>
            <person name="Sasaki T."/>
            <person name="Iida M."/>
            <person name="Ito T."/>
        </authorList>
    </citation>
    <scope>FUNCTION</scope>
    <scope>MUTAGENESIS OF TYR-109 AND LEU-114</scope>
</reference>
<reference key="8">
    <citation type="journal article" date="2005" name="Mol. Cell. Proteomics">
        <title>GYF domain proteomics reveals interaction sites in known and novel target proteins.</title>
        <authorList>
            <person name="Kofler M."/>
            <person name="Motzny K."/>
            <person name="Freund C."/>
        </authorList>
    </citation>
    <scope>INTERACTION WITH SMY2 AND SYH1</scope>
</reference>
<reference key="9">
    <citation type="journal article" date="2007" name="J. Proteome Res.">
        <title>Large-scale phosphorylation analysis of alpha-factor-arrested Saccharomyces cerevisiae.</title>
        <authorList>
            <person name="Li X."/>
            <person name="Gerber S.A."/>
            <person name="Rudner A.D."/>
            <person name="Beausoleil S.A."/>
            <person name="Haas W."/>
            <person name="Villen J."/>
            <person name="Elias J.E."/>
            <person name="Gygi S.P."/>
        </authorList>
    </citation>
    <scope>IDENTIFICATION BY MASS SPECTROMETRY [LARGE SCALE ANALYSIS]</scope>
    <source>
        <strain>ADR376</strain>
    </source>
</reference>
<reference key="10">
    <citation type="journal article" date="2008" name="Mol. Cell. Proteomics">
        <title>A multidimensional chromatography technology for in-depth phosphoproteome analysis.</title>
        <authorList>
            <person name="Albuquerque C.P."/>
            <person name="Smolka M.B."/>
            <person name="Payne S.H."/>
            <person name="Bafna V."/>
            <person name="Eng J."/>
            <person name="Zhou H."/>
        </authorList>
    </citation>
    <scope>PHOSPHORYLATION [LARGE SCALE ANALYSIS] AT SER-30; SER-281; SER-282; SER-327; SER-344 AND SER-387</scope>
    <scope>IDENTIFICATION BY MASS SPECTROMETRY [LARGE SCALE ANALYSIS]</scope>
</reference>
<reference key="11">
    <citation type="journal article" date="2009" name="Science">
        <title>Global analysis of Cdk1 substrate phosphorylation sites provides insights into evolution.</title>
        <authorList>
            <person name="Holt L.J."/>
            <person name="Tuch B.B."/>
            <person name="Villen J."/>
            <person name="Johnson A.D."/>
            <person name="Gygi S.P."/>
            <person name="Morgan D.O."/>
        </authorList>
    </citation>
    <scope>PHOSPHORYLATION [LARGE SCALE ANALYSIS] AT SER-282 AND SER-327</scope>
    <scope>IDENTIFICATION BY MASS SPECTROMETRY [LARGE SCALE ANALYSIS]</scope>
</reference>
<comment type="function">
    <text evidence="3 4 7">Can regulate translation through binding to eIF4E. Competes with eIF4G and p20 for binding to eIF4E in vivo and inhibits cap-dependent translation in vitro. Plays a role in cell growth and is implicated in the TOR signaling cascade. Functions independently of eIF4E to maintain genetic stability and to attenuate GCN4 translation upon TOR inactivation.</text>
</comment>
<comment type="subunit">
    <text evidence="3 8">Interacts with SMY2, SYH1 and eIF4E.</text>
</comment>
<comment type="subcellular location">
    <subcellularLocation>
        <location evidence="5">Cytoplasm</location>
    </subcellularLocation>
</comment>
<comment type="miscellaneous">
    <text evidence="6">Present with 3240 molecules/cell in log phase SD medium.</text>
</comment>
<dbReference type="EMBL" id="Z28204">
    <property type="protein sequence ID" value="CAA82049.1"/>
    <property type="molecule type" value="Genomic_DNA"/>
</dbReference>
<dbReference type="EMBL" id="BK006944">
    <property type="protein sequence ID" value="DAA08965.1"/>
    <property type="molecule type" value="Genomic_DNA"/>
</dbReference>
<dbReference type="PIR" id="S38042">
    <property type="entry name" value="S38042"/>
</dbReference>
<dbReference type="RefSeq" id="NP_012718.1">
    <property type="nucleotide sequence ID" value="NM_001179769.1"/>
</dbReference>
<dbReference type="PDB" id="6FC1">
    <property type="method" value="X-ray"/>
    <property type="resolution" value="1.35 A"/>
    <property type="chains" value="B/D=91-150"/>
</dbReference>
<dbReference type="PDB" id="6FC2">
    <property type="method" value="X-ray"/>
    <property type="resolution" value="1.92 A"/>
    <property type="chains" value="B/D=91-150"/>
</dbReference>
<dbReference type="PDBsum" id="6FC1"/>
<dbReference type="PDBsum" id="6FC2"/>
<dbReference type="SMR" id="P36041"/>
<dbReference type="BioGRID" id="33919">
    <property type="interactions" value="512"/>
</dbReference>
<dbReference type="DIP" id="DIP-1778N"/>
<dbReference type="FunCoup" id="P36041">
    <property type="interactions" value="198"/>
</dbReference>
<dbReference type="IntAct" id="P36041">
    <property type="interactions" value="22"/>
</dbReference>
<dbReference type="MINT" id="P36041"/>
<dbReference type="STRING" id="4932.YKL204W"/>
<dbReference type="GlyGen" id="P36041">
    <property type="glycosylation" value="2 sites, 1 O-linked glycan (2 sites)"/>
</dbReference>
<dbReference type="iPTMnet" id="P36041"/>
<dbReference type="PaxDb" id="4932-YKL204W"/>
<dbReference type="PeptideAtlas" id="P36041"/>
<dbReference type="EnsemblFungi" id="YKL204W_mRNA">
    <property type="protein sequence ID" value="YKL204W"/>
    <property type="gene ID" value="YKL204W"/>
</dbReference>
<dbReference type="GeneID" id="853631"/>
<dbReference type="KEGG" id="sce:YKL204W"/>
<dbReference type="AGR" id="SGD:S000001687"/>
<dbReference type="SGD" id="S000001687">
    <property type="gene designation" value="EAP1"/>
</dbReference>
<dbReference type="VEuPathDB" id="FungiDB:YKL204W"/>
<dbReference type="eggNOG" id="ENOG502S0PT">
    <property type="taxonomic scope" value="Eukaryota"/>
</dbReference>
<dbReference type="HOGENOM" id="CLU_418607_0_0_1"/>
<dbReference type="InParanoid" id="P36041"/>
<dbReference type="OMA" id="HANNHHF"/>
<dbReference type="OrthoDB" id="4065296at2759"/>
<dbReference type="BioCyc" id="YEAST:G3O-31963-MONOMER"/>
<dbReference type="BioGRID-ORCS" id="853631">
    <property type="hits" value="2 hits in 10 CRISPR screens"/>
</dbReference>
<dbReference type="CD-CODE" id="A777E0F8">
    <property type="entry name" value="P-body"/>
</dbReference>
<dbReference type="CD-CODE" id="E03F929F">
    <property type="entry name" value="Stress granule"/>
</dbReference>
<dbReference type="PRO" id="PR:P36041"/>
<dbReference type="Proteomes" id="UP000002311">
    <property type="component" value="Chromosome XI"/>
</dbReference>
<dbReference type="RNAct" id="P36041">
    <property type="molecule type" value="protein"/>
</dbReference>
<dbReference type="GO" id="GO:0010494">
    <property type="term" value="C:cytoplasmic stress granule"/>
    <property type="evidence" value="ECO:0000314"/>
    <property type="project" value="SGD"/>
</dbReference>
<dbReference type="GO" id="GO:0005524">
    <property type="term" value="F:ATP binding"/>
    <property type="evidence" value="ECO:0007669"/>
    <property type="project" value="UniProtKB-KW"/>
</dbReference>
<dbReference type="GO" id="GO:0008190">
    <property type="term" value="F:eukaryotic initiation factor 4E binding"/>
    <property type="evidence" value="ECO:0000314"/>
    <property type="project" value="SGD"/>
</dbReference>
<dbReference type="GO" id="GO:0003729">
    <property type="term" value="F:mRNA binding"/>
    <property type="evidence" value="ECO:0007005"/>
    <property type="project" value="SGD"/>
</dbReference>
<dbReference type="GO" id="GO:0000290">
    <property type="term" value="P:deadenylation-dependent decapping of nuclear-transcribed mRNA"/>
    <property type="evidence" value="ECO:0000315"/>
    <property type="project" value="SGD"/>
</dbReference>
<dbReference type="GO" id="GO:0006402">
    <property type="term" value="P:mRNA catabolic process"/>
    <property type="evidence" value="ECO:0000315"/>
    <property type="project" value="SGD"/>
</dbReference>
<dbReference type="GO" id="GO:0017148">
    <property type="term" value="P:negative regulation of translation"/>
    <property type="evidence" value="ECO:0000314"/>
    <property type="project" value="SGD"/>
</dbReference>
<dbReference type="InterPro" id="IPR046784">
    <property type="entry name" value="Eap1"/>
</dbReference>
<dbReference type="Pfam" id="PF20566">
    <property type="entry name" value="Eap1"/>
    <property type="match status" value="1"/>
</dbReference>
<accession>P36041</accession>
<accession>D6VWZ9</accession>
<organism>
    <name type="scientific">Saccharomyces cerevisiae (strain ATCC 204508 / S288c)</name>
    <name type="common">Baker's yeast</name>
    <dbReference type="NCBI Taxonomy" id="559292"/>
    <lineage>
        <taxon>Eukaryota</taxon>
        <taxon>Fungi</taxon>
        <taxon>Dikarya</taxon>
        <taxon>Ascomycota</taxon>
        <taxon>Saccharomycotina</taxon>
        <taxon>Saccharomycetes</taxon>
        <taxon>Saccharomycetales</taxon>
        <taxon>Saccharomycetaceae</taxon>
        <taxon>Saccharomyces</taxon>
    </lineage>
</organism>
<protein>
    <recommendedName>
        <fullName>Protein EAP1</fullName>
    </recommendedName>
    <alternativeName>
        <fullName>eIF4E-associated protein 1</fullName>
    </alternativeName>
</protein>
<name>EAP1_YEAST</name>
<feature type="chain" id="PRO_0000203133" description="Protein EAP1">
    <location>
        <begin position="1"/>
        <end position="632"/>
    </location>
</feature>
<feature type="region of interest" description="Disordered" evidence="2">
    <location>
        <begin position="1"/>
        <end position="80"/>
    </location>
</feature>
<feature type="region of interest" description="Disordered" evidence="2">
    <location>
        <begin position="149"/>
        <end position="204"/>
    </location>
</feature>
<feature type="region of interest" description="Disordered" evidence="2">
    <location>
        <begin position="248"/>
        <end position="313"/>
    </location>
</feature>
<feature type="region of interest" description="Disordered" evidence="2">
    <location>
        <begin position="347"/>
        <end position="378"/>
    </location>
</feature>
<feature type="region of interest" description="Disordered" evidence="2">
    <location>
        <begin position="429"/>
        <end position="541"/>
    </location>
</feature>
<feature type="region of interest" description="Disordered" evidence="2">
    <location>
        <begin position="587"/>
        <end position="632"/>
    </location>
</feature>
<feature type="compositionally biased region" description="Polar residues" evidence="2">
    <location>
        <begin position="7"/>
        <end position="38"/>
    </location>
</feature>
<feature type="compositionally biased region" description="Polar residues" evidence="2">
    <location>
        <begin position="54"/>
        <end position="69"/>
    </location>
</feature>
<feature type="compositionally biased region" description="Basic and acidic residues" evidence="2">
    <location>
        <begin position="288"/>
        <end position="298"/>
    </location>
</feature>
<feature type="compositionally biased region" description="Low complexity" evidence="2">
    <location>
        <begin position="353"/>
        <end position="371"/>
    </location>
</feature>
<feature type="compositionally biased region" description="Pro residues" evidence="2">
    <location>
        <begin position="474"/>
        <end position="486"/>
    </location>
</feature>
<feature type="compositionally biased region" description="Basic and acidic residues" evidence="2">
    <location>
        <begin position="492"/>
        <end position="505"/>
    </location>
</feature>
<feature type="compositionally biased region" description="Polar residues" evidence="2">
    <location>
        <begin position="507"/>
        <end position="516"/>
    </location>
</feature>
<feature type="compositionally biased region" description="Polar residues" evidence="2">
    <location>
        <begin position="590"/>
        <end position="603"/>
    </location>
</feature>
<feature type="compositionally biased region" description="Polar residues" evidence="2">
    <location>
        <begin position="610"/>
        <end position="621"/>
    </location>
</feature>
<feature type="binding site" evidence="1">
    <location>
        <begin position="440"/>
        <end position="447"/>
    </location>
    <ligand>
        <name>ATP</name>
        <dbReference type="ChEBI" id="CHEBI:30616"/>
    </ligand>
</feature>
<feature type="modified residue" description="Phosphoserine" evidence="9">
    <location>
        <position position="30"/>
    </location>
</feature>
<feature type="modified residue" description="Phosphoserine" evidence="9">
    <location>
        <position position="281"/>
    </location>
</feature>
<feature type="modified residue" description="Phosphoserine" evidence="9 10">
    <location>
        <position position="282"/>
    </location>
</feature>
<feature type="modified residue" description="Phosphoserine" evidence="9 10">
    <location>
        <position position="327"/>
    </location>
</feature>
<feature type="modified residue" description="Phosphoserine" evidence="9">
    <location>
        <position position="344"/>
    </location>
</feature>
<feature type="modified residue" description="Phosphoserine" evidence="9">
    <location>
        <position position="387"/>
    </location>
</feature>
<feature type="mutagenesis site" description="Abolishes interaction with eIF4E; when associated with A-114." evidence="3 7">
    <original>Y</original>
    <variation>A</variation>
    <location>
        <position position="109"/>
    </location>
</feature>
<feature type="mutagenesis site" description="Abolishes interaction with eIF4E; when associated with A-109." evidence="7">
    <original>L</original>
    <variation>A</variation>
    <location>
        <position position="114"/>
    </location>
</feature>
<feature type="helix" evidence="11">
    <location>
        <begin position="93"/>
        <end position="96"/>
    </location>
</feature>
<feature type="helix" evidence="11">
    <location>
        <begin position="111"/>
        <end position="116"/>
    </location>
</feature>
<feature type="helix" evidence="11">
    <location>
        <begin position="122"/>
        <end position="124"/>
    </location>
</feature>
<feature type="turn" evidence="11">
    <location>
        <begin position="125"/>
        <end position="127"/>
    </location>
</feature>
<feature type="helix" evidence="11">
    <location>
        <begin position="130"/>
        <end position="137"/>
    </location>
</feature>
<feature type="helix" evidence="11">
    <location>
        <begin position="142"/>
        <end position="145"/>
    </location>
</feature>
<feature type="helix" evidence="12">
    <location>
        <begin position="147"/>
        <end position="149"/>
    </location>
</feature>
<evidence type="ECO:0000255" key="1"/>
<evidence type="ECO:0000256" key="2">
    <source>
        <dbReference type="SAM" id="MobiDB-lite"/>
    </source>
</evidence>
<evidence type="ECO:0000269" key="3">
    <source>
    </source>
</evidence>
<evidence type="ECO:0000269" key="4">
    <source>
    </source>
</evidence>
<evidence type="ECO:0000269" key="5">
    <source>
    </source>
</evidence>
<evidence type="ECO:0000269" key="6">
    <source>
    </source>
</evidence>
<evidence type="ECO:0000269" key="7">
    <source>
    </source>
</evidence>
<evidence type="ECO:0000269" key="8">
    <source>
    </source>
</evidence>
<evidence type="ECO:0007744" key="9">
    <source>
    </source>
</evidence>
<evidence type="ECO:0007744" key="10">
    <source>
    </source>
</evidence>
<evidence type="ECO:0007829" key="11">
    <source>
        <dbReference type="PDB" id="6FC1"/>
    </source>
</evidence>
<evidence type="ECO:0007829" key="12">
    <source>
        <dbReference type="PDB" id="6FC2"/>
    </source>
</evidence>
<sequence length="632" mass="69762">MELNDPSIISSSQFSGELSDSDTAAATHKSQQAISNLFQKLAKKGREEKPIGSVESSTDSSNISVATSGNNKESNKKKNKKTAMLNFSSLTDPITNYKPMDLQYKTYAYSMNELYHLKPSLASASYEEDPLISELVRSLPKRKFWRLRMGPPDQKHANNHHFNGNNGGGSWKAGYKNGKNDERRMSRTKNMQGGKRRSQQDDEEKKIDQEMLEMDKNLQLGGDVGHSIADFEDWKAKMKELELKKLSKSKGISNSTAIAPRESASHETPTDLRPVIPRGPSSITDFLNLKRQDKKEESSQQTPGIPVGQPSLSKTSIEQVNELETNSDLGKSSSSRFSSFFNKSATSLPSLDNNNQVPSSNVSVVNNDGNSTPHQSGSRLMSFFKESRSSTPNAESQLLSASDKDNGKMQTLPQFQQQPQQMQPMAFTQHPPNNNAFFNGLLNKGKSETSTPPPPPPGLIAHQGPQFPVMGVPPNFPQRMMPPPPGLVQFQKDSKDVNKKEDRQLRQNKNPNGTRNSKGKQEETATPDLPQQQYMPPPPPPGFFPMHPNFPNGPMPPLPQGFPIPPNGMLPVTGQQPQPPYPNMMLQGNFPPNFQQGFGSNSPMPIPSIINANGKNVTNQLPPGLNSKKNIK</sequence>
<gene>
    <name type="primary">EAP1</name>
    <name type="ordered locus">YKL204W</name>
</gene>